<name>HEM3_BACC7</name>
<accession>B7HQM4</accession>
<gene>
    <name evidence="1" type="primary">hemC</name>
    <name type="ordered locus">BCAH187_A4600</name>
</gene>
<organism>
    <name type="scientific">Bacillus cereus (strain AH187)</name>
    <dbReference type="NCBI Taxonomy" id="405534"/>
    <lineage>
        <taxon>Bacteria</taxon>
        <taxon>Bacillati</taxon>
        <taxon>Bacillota</taxon>
        <taxon>Bacilli</taxon>
        <taxon>Bacillales</taxon>
        <taxon>Bacillaceae</taxon>
        <taxon>Bacillus</taxon>
        <taxon>Bacillus cereus group</taxon>
    </lineage>
</organism>
<dbReference type="EC" id="2.5.1.61" evidence="1"/>
<dbReference type="EMBL" id="CP001177">
    <property type="protein sequence ID" value="ACJ81133.1"/>
    <property type="molecule type" value="Genomic_DNA"/>
</dbReference>
<dbReference type="SMR" id="B7HQM4"/>
<dbReference type="KEGG" id="bcr:BCAH187_A4600"/>
<dbReference type="HOGENOM" id="CLU_019704_0_2_9"/>
<dbReference type="UniPathway" id="UPA00251">
    <property type="reaction ID" value="UER00319"/>
</dbReference>
<dbReference type="Proteomes" id="UP000002214">
    <property type="component" value="Chromosome"/>
</dbReference>
<dbReference type="GO" id="GO:0005737">
    <property type="term" value="C:cytoplasm"/>
    <property type="evidence" value="ECO:0007669"/>
    <property type="project" value="TreeGrafter"/>
</dbReference>
<dbReference type="GO" id="GO:0004418">
    <property type="term" value="F:hydroxymethylbilane synthase activity"/>
    <property type="evidence" value="ECO:0007669"/>
    <property type="project" value="UniProtKB-UniRule"/>
</dbReference>
<dbReference type="GO" id="GO:0006782">
    <property type="term" value="P:protoporphyrinogen IX biosynthetic process"/>
    <property type="evidence" value="ECO:0007669"/>
    <property type="project" value="UniProtKB-UniRule"/>
</dbReference>
<dbReference type="CDD" id="cd13646">
    <property type="entry name" value="PBP2_EcHMBS_like"/>
    <property type="match status" value="1"/>
</dbReference>
<dbReference type="FunFam" id="3.30.160.40:FF:000001">
    <property type="entry name" value="Porphobilinogen deaminase"/>
    <property type="match status" value="1"/>
</dbReference>
<dbReference type="FunFam" id="3.40.190.10:FF:000004">
    <property type="entry name" value="Porphobilinogen deaminase"/>
    <property type="match status" value="1"/>
</dbReference>
<dbReference type="FunFam" id="3.40.190.10:FF:000005">
    <property type="entry name" value="Porphobilinogen deaminase"/>
    <property type="match status" value="1"/>
</dbReference>
<dbReference type="Gene3D" id="3.40.190.10">
    <property type="entry name" value="Periplasmic binding protein-like II"/>
    <property type="match status" value="2"/>
</dbReference>
<dbReference type="Gene3D" id="3.30.160.40">
    <property type="entry name" value="Porphobilinogen deaminase, C-terminal domain"/>
    <property type="match status" value="1"/>
</dbReference>
<dbReference type="HAMAP" id="MF_00260">
    <property type="entry name" value="Porphobil_deam"/>
    <property type="match status" value="1"/>
</dbReference>
<dbReference type="InterPro" id="IPR000860">
    <property type="entry name" value="HemC"/>
</dbReference>
<dbReference type="InterPro" id="IPR022419">
    <property type="entry name" value="Porphobilin_deaminase_cofac_BS"/>
</dbReference>
<dbReference type="InterPro" id="IPR022417">
    <property type="entry name" value="Porphobilin_deaminase_N"/>
</dbReference>
<dbReference type="InterPro" id="IPR022418">
    <property type="entry name" value="Porphobilinogen_deaminase_C"/>
</dbReference>
<dbReference type="InterPro" id="IPR036803">
    <property type="entry name" value="Porphobilinogen_deaminase_C_sf"/>
</dbReference>
<dbReference type="NCBIfam" id="TIGR00212">
    <property type="entry name" value="hemC"/>
    <property type="match status" value="1"/>
</dbReference>
<dbReference type="PANTHER" id="PTHR11557">
    <property type="entry name" value="PORPHOBILINOGEN DEAMINASE"/>
    <property type="match status" value="1"/>
</dbReference>
<dbReference type="PANTHER" id="PTHR11557:SF0">
    <property type="entry name" value="PORPHOBILINOGEN DEAMINASE"/>
    <property type="match status" value="1"/>
</dbReference>
<dbReference type="Pfam" id="PF01379">
    <property type="entry name" value="Porphobil_deam"/>
    <property type="match status" value="1"/>
</dbReference>
<dbReference type="Pfam" id="PF03900">
    <property type="entry name" value="Porphobil_deamC"/>
    <property type="match status" value="1"/>
</dbReference>
<dbReference type="PIRSF" id="PIRSF001438">
    <property type="entry name" value="4pyrrol_synth_OHMeBilane_synth"/>
    <property type="match status" value="1"/>
</dbReference>
<dbReference type="PRINTS" id="PR00151">
    <property type="entry name" value="PORPHBDMNASE"/>
</dbReference>
<dbReference type="SUPFAM" id="SSF53850">
    <property type="entry name" value="Periplasmic binding protein-like II"/>
    <property type="match status" value="1"/>
</dbReference>
<dbReference type="SUPFAM" id="SSF54782">
    <property type="entry name" value="Porphobilinogen deaminase (hydroxymethylbilane synthase), C-terminal domain"/>
    <property type="match status" value="1"/>
</dbReference>
<dbReference type="PROSITE" id="PS00533">
    <property type="entry name" value="PORPHOBILINOGEN_DEAM"/>
    <property type="match status" value="1"/>
</dbReference>
<comment type="function">
    <text evidence="1">Tetrapolymerization of the monopyrrole PBG into the hydroxymethylbilane pre-uroporphyrinogen in several discrete steps.</text>
</comment>
<comment type="catalytic activity">
    <reaction evidence="1">
        <text>4 porphobilinogen + H2O = hydroxymethylbilane + 4 NH4(+)</text>
        <dbReference type="Rhea" id="RHEA:13185"/>
        <dbReference type="ChEBI" id="CHEBI:15377"/>
        <dbReference type="ChEBI" id="CHEBI:28938"/>
        <dbReference type="ChEBI" id="CHEBI:57845"/>
        <dbReference type="ChEBI" id="CHEBI:58126"/>
        <dbReference type="EC" id="2.5.1.61"/>
    </reaction>
</comment>
<comment type="cofactor">
    <cofactor evidence="1">
        <name>dipyrromethane</name>
        <dbReference type="ChEBI" id="CHEBI:60342"/>
    </cofactor>
    <text evidence="1">Binds 1 dipyrromethane group covalently.</text>
</comment>
<comment type="pathway">
    <text evidence="1">Porphyrin-containing compound metabolism; protoporphyrin-IX biosynthesis; coproporphyrinogen-III from 5-aminolevulinate: step 2/4.</text>
</comment>
<comment type="subunit">
    <text evidence="1">Monomer.</text>
</comment>
<comment type="miscellaneous">
    <text evidence="1">The porphobilinogen subunits are added to the dipyrromethane group.</text>
</comment>
<comment type="similarity">
    <text evidence="1">Belongs to the HMBS family.</text>
</comment>
<proteinExistence type="inferred from homology"/>
<feature type="chain" id="PRO_1000119210" description="Porphobilinogen deaminase">
    <location>
        <begin position="1"/>
        <end position="309"/>
    </location>
</feature>
<feature type="modified residue" description="S-(dipyrrolylmethanemethyl)cysteine" evidence="1">
    <location>
        <position position="241"/>
    </location>
</feature>
<evidence type="ECO:0000255" key="1">
    <source>
        <dbReference type="HAMAP-Rule" id="MF_00260"/>
    </source>
</evidence>
<keyword id="KW-0627">Porphyrin biosynthesis</keyword>
<keyword id="KW-0808">Transferase</keyword>
<reference key="1">
    <citation type="submission" date="2008-10" db="EMBL/GenBank/DDBJ databases">
        <title>Genome sequence of Bacillus cereus AH187.</title>
        <authorList>
            <person name="Dodson R.J."/>
            <person name="Durkin A.S."/>
            <person name="Rosovitz M.J."/>
            <person name="Rasko D.A."/>
            <person name="Kolsto A.B."/>
            <person name="Okstad O.A."/>
            <person name="Ravel J."/>
            <person name="Sutton G."/>
        </authorList>
    </citation>
    <scope>NUCLEOTIDE SEQUENCE [LARGE SCALE GENOMIC DNA]</scope>
    <source>
        <strain>AH187</strain>
    </source>
</reference>
<protein>
    <recommendedName>
        <fullName evidence="1">Porphobilinogen deaminase</fullName>
        <shortName evidence="1">PBG</shortName>
        <ecNumber evidence="1">2.5.1.61</ecNumber>
    </recommendedName>
    <alternativeName>
        <fullName evidence="1">Hydroxymethylbilane synthase</fullName>
        <shortName evidence="1">HMBS</shortName>
    </alternativeName>
    <alternativeName>
        <fullName evidence="1">Pre-uroporphyrinogen synthase</fullName>
    </alternativeName>
</protein>
<sequence length="309" mass="33763">MRKIIVGSRKSKLALTQTNWFIDQLKALGLPYEFEVKEIVTKGDVILDVTLSKVGGKGLFVKEIEHALLTKEIDMAVHSMKDMPAVLPEGLMIGCTPKRVDPRDAFISKNGASFKELAEGAILGTSSLRRSAQLLAARPDLQVKWIRGNIDTRLRKLKEEDYDAIILATAGLQRMGWDNEVITEHLDETLCVPAVGQGALAIECREDDKDLLQLLAHMNDGVTEKTVAAERVFLHKLEGGCQVPIAGYATLTENDAIELTALVGSMDGSVLLKEKVVGTDPEKVGLEAADRLINQGAKELILAANKEQQ</sequence>